<sequence length="208" mass="22756">MIVIIDYDTGNTKSISKALDFIGLQNKISSDKTEIAQADGVILPGVGAYPEAMQELTRRGLDKTLKEIATAGKPILGVCLGMQLLLESSNEHSYTKGLGLIPGHVEMLPDESEFAVPHMGWNQLQIKRTTPLTQNIAGEYVYYVHSYYANCPEAYIIATSGYSIDIPGMINNGNIYGAQFHPEKSGQIGLEILKGFKEVIRSCKSSQQ</sequence>
<accession>Q722Y5</accession>
<comment type="function">
    <text evidence="1">IGPS catalyzes the conversion of PRFAR and glutamine to IGP, AICAR and glutamate. The HisH subunit catalyzes the hydrolysis of glutamine to glutamate and ammonia as part of the synthesis of IGP and AICAR. The resulting ammonia molecule is channeled to the active site of HisF.</text>
</comment>
<comment type="catalytic activity">
    <reaction evidence="1">
        <text>5-[(5-phospho-1-deoxy-D-ribulos-1-ylimino)methylamino]-1-(5-phospho-beta-D-ribosyl)imidazole-4-carboxamide + L-glutamine = D-erythro-1-(imidazol-4-yl)glycerol 3-phosphate + 5-amino-1-(5-phospho-beta-D-ribosyl)imidazole-4-carboxamide + L-glutamate + H(+)</text>
        <dbReference type="Rhea" id="RHEA:24793"/>
        <dbReference type="ChEBI" id="CHEBI:15378"/>
        <dbReference type="ChEBI" id="CHEBI:29985"/>
        <dbReference type="ChEBI" id="CHEBI:58278"/>
        <dbReference type="ChEBI" id="CHEBI:58359"/>
        <dbReference type="ChEBI" id="CHEBI:58475"/>
        <dbReference type="ChEBI" id="CHEBI:58525"/>
        <dbReference type="EC" id="4.3.2.10"/>
    </reaction>
</comment>
<comment type="catalytic activity">
    <reaction evidence="1">
        <text>L-glutamine + H2O = L-glutamate + NH4(+)</text>
        <dbReference type="Rhea" id="RHEA:15889"/>
        <dbReference type="ChEBI" id="CHEBI:15377"/>
        <dbReference type="ChEBI" id="CHEBI:28938"/>
        <dbReference type="ChEBI" id="CHEBI:29985"/>
        <dbReference type="ChEBI" id="CHEBI:58359"/>
        <dbReference type="EC" id="3.5.1.2"/>
    </reaction>
</comment>
<comment type="pathway">
    <text evidence="1">Amino-acid biosynthesis; L-histidine biosynthesis; L-histidine from 5-phospho-alpha-D-ribose 1-diphosphate: step 5/9.</text>
</comment>
<comment type="subunit">
    <text evidence="1">Heterodimer of HisH and HisF.</text>
</comment>
<comment type="subcellular location">
    <subcellularLocation>
        <location evidence="1">Cytoplasm</location>
    </subcellularLocation>
</comment>
<keyword id="KW-0028">Amino-acid biosynthesis</keyword>
<keyword id="KW-0963">Cytoplasm</keyword>
<keyword id="KW-0315">Glutamine amidotransferase</keyword>
<keyword id="KW-0368">Histidine biosynthesis</keyword>
<keyword id="KW-0378">Hydrolase</keyword>
<keyword id="KW-0456">Lyase</keyword>
<dbReference type="EC" id="4.3.2.10" evidence="1"/>
<dbReference type="EC" id="3.5.1.2" evidence="1"/>
<dbReference type="EMBL" id="AE017262">
    <property type="protein sequence ID" value="AAT03376.1"/>
    <property type="molecule type" value="Genomic_DNA"/>
</dbReference>
<dbReference type="RefSeq" id="WP_003725467.1">
    <property type="nucleotide sequence ID" value="NC_002973.6"/>
</dbReference>
<dbReference type="SMR" id="Q722Y5"/>
<dbReference type="KEGG" id="lmf:LMOf2365_0594"/>
<dbReference type="HOGENOM" id="CLU_071837_2_2_9"/>
<dbReference type="UniPathway" id="UPA00031">
    <property type="reaction ID" value="UER00010"/>
</dbReference>
<dbReference type="GO" id="GO:0005737">
    <property type="term" value="C:cytoplasm"/>
    <property type="evidence" value="ECO:0007669"/>
    <property type="project" value="UniProtKB-SubCell"/>
</dbReference>
<dbReference type="GO" id="GO:0004359">
    <property type="term" value="F:glutaminase activity"/>
    <property type="evidence" value="ECO:0007669"/>
    <property type="project" value="UniProtKB-EC"/>
</dbReference>
<dbReference type="GO" id="GO:0000107">
    <property type="term" value="F:imidazoleglycerol-phosphate synthase activity"/>
    <property type="evidence" value="ECO:0007669"/>
    <property type="project" value="UniProtKB-UniRule"/>
</dbReference>
<dbReference type="GO" id="GO:0016829">
    <property type="term" value="F:lyase activity"/>
    <property type="evidence" value="ECO:0007669"/>
    <property type="project" value="UniProtKB-KW"/>
</dbReference>
<dbReference type="GO" id="GO:0000105">
    <property type="term" value="P:L-histidine biosynthetic process"/>
    <property type="evidence" value="ECO:0007669"/>
    <property type="project" value="UniProtKB-UniRule"/>
</dbReference>
<dbReference type="CDD" id="cd01748">
    <property type="entry name" value="GATase1_IGP_Synthase"/>
    <property type="match status" value="1"/>
</dbReference>
<dbReference type="FunFam" id="3.40.50.880:FF:000028">
    <property type="entry name" value="Imidazole glycerol phosphate synthase subunit HisH"/>
    <property type="match status" value="1"/>
</dbReference>
<dbReference type="Gene3D" id="3.40.50.880">
    <property type="match status" value="1"/>
</dbReference>
<dbReference type="HAMAP" id="MF_00278">
    <property type="entry name" value="HisH"/>
    <property type="match status" value="1"/>
</dbReference>
<dbReference type="InterPro" id="IPR029062">
    <property type="entry name" value="Class_I_gatase-like"/>
</dbReference>
<dbReference type="InterPro" id="IPR017926">
    <property type="entry name" value="GATASE"/>
</dbReference>
<dbReference type="InterPro" id="IPR010139">
    <property type="entry name" value="Imidazole-glycPsynth_HisH"/>
</dbReference>
<dbReference type="NCBIfam" id="TIGR01855">
    <property type="entry name" value="IMP_synth_hisH"/>
    <property type="match status" value="1"/>
</dbReference>
<dbReference type="PANTHER" id="PTHR42701">
    <property type="entry name" value="IMIDAZOLE GLYCEROL PHOSPHATE SYNTHASE SUBUNIT HISH"/>
    <property type="match status" value="1"/>
</dbReference>
<dbReference type="PANTHER" id="PTHR42701:SF1">
    <property type="entry name" value="IMIDAZOLE GLYCEROL PHOSPHATE SYNTHASE SUBUNIT HISH"/>
    <property type="match status" value="1"/>
</dbReference>
<dbReference type="Pfam" id="PF00117">
    <property type="entry name" value="GATase"/>
    <property type="match status" value="1"/>
</dbReference>
<dbReference type="PIRSF" id="PIRSF000495">
    <property type="entry name" value="Amidotransf_hisH"/>
    <property type="match status" value="1"/>
</dbReference>
<dbReference type="SUPFAM" id="SSF52317">
    <property type="entry name" value="Class I glutamine amidotransferase-like"/>
    <property type="match status" value="1"/>
</dbReference>
<dbReference type="PROSITE" id="PS51273">
    <property type="entry name" value="GATASE_TYPE_1"/>
    <property type="match status" value="1"/>
</dbReference>
<organism>
    <name type="scientific">Listeria monocytogenes serotype 4b (strain F2365)</name>
    <dbReference type="NCBI Taxonomy" id="265669"/>
    <lineage>
        <taxon>Bacteria</taxon>
        <taxon>Bacillati</taxon>
        <taxon>Bacillota</taxon>
        <taxon>Bacilli</taxon>
        <taxon>Bacillales</taxon>
        <taxon>Listeriaceae</taxon>
        <taxon>Listeria</taxon>
    </lineage>
</organism>
<feature type="chain" id="PRO_0000152390" description="Imidazole glycerol phosphate synthase subunit HisH">
    <location>
        <begin position="1"/>
        <end position="208"/>
    </location>
</feature>
<feature type="domain" description="Glutamine amidotransferase type-1" evidence="1">
    <location>
        <begin position="1"/>
        <end position="206"/>
    </location>
</feature>
<feature type="active site" description="Nucleophile" evidence="1">
    <location>
        <position position="79"/>
    </location>
</feature>
<feature type="active site" evidence="1">
    <location>
        <position position="181"/>
    </location>
</feature>
<feature type="active site" evidence="1">
    <location>
        <position position="183"/>
    </location>
</feature>
<proteinExistence type="inferred from homology"/>
<evidence type="ECO:0000255" key="1">
    <source>
        <dbReference type="HAMAP-Rule" id="MF_00278"/>
    </source>
</evidence>
<name>HIS5_LISMF</name>
<reference key="1">
    <citation type="journal article" date="2004" name="Nucleic Acids Res.">
        <title>Whole genome comparisons of serotype 4b and 1/2a strains of the food-borne pathogen Listeria monocytogenes reveal new insights into the core genome components of this species.</title>
        <authorList>
            <person name="Nelson K.E."/>
            <person name="Fouts D.E."/>
            <person name="Mongodin E.F."/>
            <person name="Ravel J."/>
            <person name="DeBoy R.T."/>
            <person name="Kolonay J.F."/>
            <person name="Rasko D.A."/>
            <person name="Angiuoli S.V."/>
            <person name="Gill S.R."/>
            <person name="Paulsen I.T."/>
            <person name="Peterson J.D."/>
            <person name="White O."/>
            <person name="Nelson W.C."/>
            <person name="Nierman W.C."/>
            <person name="Beanan M.J."/>
            <person name="Brinkac L.M."/>
            <person name="Daugherty S.C."/>
            <person name="Dodson R.J."/>
            <person name="Durkin A.S."/>
            <person name="Madupu R."/>
            <person name="Haft D.H."/>
            <person name="Selengut J."/>
            <person name="Van Aken S.E."/>
            <person name="Khouri H.M."/>
            <person name="Fedorova N."/>
            <person name="Forberger H.A."/>
            <person name="Tran B."/>
            <person name="Kathariou S."/>
            <person name="Wonderling L.D."/>
            <person name="Uhlich G.A."/>
            <person name="Bayles D.O."/>
            <person name="Luchansky J.B."/>
            <person name="Fraser C.M."/>
        </authorList>
    </citation>
    <scope>NUCLEOTIDE SEQUENCE [LARGE SCALE GENOMIC DNA]</scope>
    <source>
        <strain>F2365</strain>
    </source>
</reference>
<gene>
    <name evidence="1" type="primary">hisH</name>
    <name type="ordered locus">LMOf2365_0594</name>
</gene>
<protein>
    <recommendedName>
        <fullName evidence="1">Imidazole glycerol phosphate synthase subunit HisH</fullName>
        <ecNumber evidence="1">4.3.2.10</ecNumber>
    </recommendedName>
    <alternativeName>
        <fullName evidence="1">IGP synthase glutaminase subunit</fullName>
        <ecNumber evidence="1">3.5.1.2</ecNumber>
    </alternativeName>
    <alternativeName>
        <fullName evidence="1">IGP synthase subunit HisH</fullName>
    </alternativeName>
    <alternativeName>
        <fullName evidence="1">ImGP synthase subunit HisH</fullName>
        <shortName evidence="1">IGPS subunit HisH</shortName>
    </alternativeName>
</protein>